<name>MTFA_ECOK1</name>
<accession>A1ACG4</accession>
<reference key="1">
    <citation type="journal article" date="2007" name="J. Bacteriol.">
        <title>The genome sequence of avian pathogenic Escherichia coli strain O1:K1:H7 shares strong similarities with human extraintestinal pathogenic E. coli genomes.</title>
        <authorList>
            <person name="Johnson T.J."/>
            <person name="Kariyawasam S."/>
            <person name="Wannemuehler Y."/>
            <person name="Mangiamele P."/>
            <person name="Johnson S.J."/>
            <person name="Doetkott C."/>
            <person name="Skyberg J.A."/>
            <person name="Lynne A.M."/>
            <person name="Johnson J.R."/>
            <person name="Nolan L.K."/>
        </authorList>
    </citation>
    <scope>NUCLEOTIDE SEQUENCE [LARGE SCALE GENOMIC DNA]</scope>
</reference>
<dbReference type="EC" id="3.4.11.-" evidence="1"/>
<dbReference type="EMBL" id="CP000468">
    <property type="protein sequence ID" value="ABJ01354.1"/>
    <property type="status" value="ALT_INIT"/>
    <property type="molecule type" value="Genomic_DNA"/>
</dbReference>
<dbReference type="RefSeq" id="WP_001350677.1">
    <property type="nucleotide sequence ID" value="NZ_CADILS010000038.1"/>
</dbReference>
<dbReference type="SMR" id="A1ACG4"/>
<dbReference type="MEROPS" id="M90.001"/>
<dbReference type="KEGG" id="ecv:APECO1_1050"/>
<dbReference type="HOGENOM" id="CLU_063037_0_1_6"/>
<dbReference type="Proteomes" id="UP000008216">
    <property type="component" value="Chromosome"/>
</dbReference>
<dbReference type="GO" id="GO:0005829">
    <property type="term" value="C:cytosol"/>
    <property type="evidence" value="ECO:0007669"/>
    <property type="project" value="TreeGrafter"/>
</dbReference>
<dbReference type="GO" id="GO:0004177">
    <property type="term" value="F:aminopeptidase activity"/>
    <property type="evidence" value="ECO:0007669"/>
    <property type="project" value="UniProtKB-UniRule"/>
</dbReference>
<dbReference type="GO" id="GO:0008237">
    <property type="term" value="F:metallopeptidase activity"/>
    <property type="evidence" value="ECO:0007669"/>
    <property type="project" value="UniProtKB-UniRule"/>
</dbReference>
<dbReference type="GO" id="GO:0008270">
    <property type="term" value="F:zinc ion binding"/>
    <property type="evidence" value="ECO:0007669"/>
    <property type="project" value="UniProtKB-UniRule"/>
</dbReference>
<dbReference type="GO" id="GO:0006508">
    <property type="term" value="P:proteolysis"/>
    <property type="evidence" value="ECO:0007669"/>
    <property type="project" value="UniProtKB-KW"/>
</dbReference>
<dbReference type="CDD" id="cd20169">
    <property type="entry name" value="Peptidase_M90_mtfA"/>
    <property type="match status" value="1"/>
</dbReference>
<dbReference type="FunFam" id="1.10.472.150:FF:000001">
    <property type="entry name" value="Protein MtfA"/>
    <property type="match status" value="1"/>
</dbReference>
<dbReference type="FunFam" id="3.40.390.10:FF:000012">
    <property type="entry name" value="Protein MtfA"/>
    <property type="match status" value="1"/>
</dbReference>
<dbReference type="Gene3D" id="3.40.390.10">
    <property type="entry name" value="Collagenase (Catalytic Domain)"/>
    <property type="match status" value="1"/>
</dbReference>
<dbReference type="Gene3D" id="1.10.472.150">
    <property type="entry name" value="Glucose-regulated metallo-peptidase M90, N-terminal domain"/>
    <property type="match status" value="1"/>
</dbReference>
<dbReference type="HAMAP" id="MF_01593">
    <property type="entry name" value="MtfA"/>
    <property type="match status" value="1"/>
</dbReference>
<dbReference type="InterPro" id="IPR024079">
    <property type="entry name" value="MetalloPept_cat_dom_sf"/>
</dbReference>
<dbReference type="InterPro" id="IPR057256">
    <property type="entry name" value="MtfA_enterob"/>
</dbReference>
<dbReference type="InterPro" id="IPR010384">
    <property type="entry name" value="MtfA_fam"/>
</dbReference>
<dbReference type="InterPro" id="IPR042252">
    <property type="entry name" value="MtfA_N"/>
</dbReference>
<dbReference type="NCBIfam" id="NF011939">
    <property type="entry name" value="PRK15410.1"/>
    <property type="match status" value="1"/>
</dbReference>
<dbReference type="PANTHER" id="PTHR30164">
    <property type="entry name" value="MTFA PEPTIDASE"/>
    <property type="match status" value="1"/>
</dbReference>
<dbReference type="PANTHER" id="PTHR30164:SF2">
    <property type="entry name" value="PROTEIN MTFA"/>
    <property type="match status" value="1"/>
</dbReference>
<dbReference type="Pfam" id="PF06167">
    <property type="entry name" value="Peptidase_M90"/>
    <property type="match status" value="1"/>
</dbReference>
<dbReference type="SUPFAM" id="SSF55486">
    <property type="entry name" value="Metalloproteases ('zincins'), catalytic domain"/>
    <property type="match status" value="1"/>
</dbReference>
<evidence type="ECO:0000255" key="1">
    <source>
        <dbReference type="HAMAP-Rule" id="MF_01593"/>
    </source>
</evidence>
<evidence type="ECO:0000305" key="2"/>
<protein>
    <recommendedName>
        <fullName evidence="1">Mlc titration factor A</fullName>
    </recommendedName>
    <alternativeName>
        <fullName evidence="1">Probable zinc metallopeptidase MtfA</fullName>
        <ecNumber evidence="1">3.4.11.-</ecNumber>
    </alternativeName>
</protein>
<comment type="function">
    <text evidence="1">Involved in the modulation of the activity of the glucose-phosphotransferase system (glucose-PTS). Interacts with the transcriptional repressor Mlc, preventing its interaction with DNA and leading to the modulation of expression of genes regulated by Mlc, including ptsG, which encodes the PTS system glucose-specific EIICB component.</text>
</comment>
<comment type="function">
    <text evidence="1">Shows zinc-dependent metallopeptidase activity.</text>
</comment>
<comment type="cofactor">
    <cofactor evidence="1">
        <name>Zn(2+)</name>
        <dbReference type="ChEBI" id="CHEBI:29105"/>
    </cofactor>
    <text evidence="1">Binds 1 zinc ion per subunit.</text>
</comment>
<comment type="subunit">
    <text evidence="1">Interacts with Mlc.</text>
</comment>
<comment type="subcellular location">
    <subcellularLocation>
        <location evidence="1">Cytoplasm</location>
    </subcellularLocation>
</comment>
<comment type="similarity">
    <text evidence="1">Belongs to the MtfA family.</text>
</comment>
<comment type="sequence caution" evidence="2">
    <conflict type="erroneous initiation">
        <sequence resource="EMBL-CDS" id="ABJ01354"/>
    </conflict>
</comment>
<organism>
    <name type="scientific">Escherichia coli O1:K1 / APEC</name>
    <dbReference type="NCBI Taxonomy" id="405955"/>
    <lineage>
        <taxon>Bacteria</taxon>
        <taxon>Pseudomonadati</taxon>
        <taxon>Pseudomonadota</taxon>
        <taxon>Gammaproteobacteria</taxon>
        <taxon>Enterobacterales</taxon>
        <taxon>Enterobacteriaceae</taxon>
        <taxon>Escherichia</taxon>
    </lineage>
</organism>
<gene>
    <name evidence="1" type="primary">mtfA</name>
    <name type="ordered locus">Ecok1_18600</name>
    <name type="ORF">APECO1_1050</name>
</gene>
<feature type="chain" id="PRO_0000316313" description="Mlc titration factor A">
    <location>
        <begin position="1"/>
        <end position="265"/>
    </location>
</feature>
<feature type="binding site" evidence="1">
    <location>
        <position position="111"/>
    </location>
    <ligand>
        <name>Zn(2+)</name>
        <dbReference type="ChEBI" id="CHEBI:29105"/>
    </ligand>
</feature>
<feature type="binding site" evidence="1">
    <location>
        <position position="148"/>
    </location>
    <ligand>
        <name>Zn(2+)</name>
        <dbReference type="ChEBI" id="CHEBI:29105"/>
    </ligand>
</feature>
<feature type="binding site" evidence="1">
    <location>
        <position position="152"/>
    </location>
    <ligand>
        <name>Zn(2+)</name>
        <dbReference type="ChEBI" id="CHEBI:29105"/>
    </ligand>
</feature>
<feature type="binding site" evidence="1">
    <location>
        <position position="211"/>
    </location>
    <ligand>
        <name>Zn(2+)</name>
        <dbReference type="ChEBI" id="CHEBI:29105"/>
    </ligand>
</feature>
<proteinExistence type="inferred from homology"/>
<keyword id="KW-0031">Aminopeptidase</keyword>
<keyword id="KW-0963">Cytoplasm</keyword>
<keyword id="KW-0378">Hydrolase</keyword>
<keyword id="KW-0479">Metal-binding</keyword>
<keyword id="KW-0482">Metalloprotease</keyword>
<keyword id="KW-0645">Protease</keyword>
<keyword id="KW-1185">Reference proteome</keyword>
<keyword id="KW-0862">Zinc</keyword>
<sequence length="265" mass="30308">MIKWPWKVQESAHQTALPWQEALSIPLLTCLTEQEQSKLVTLAERFLQQKRLVPLQGFELNSLRSCRIALLFCLPVLELGLEWLDSFHEVLIYPAPFVVDDEWEDDIGLVHNQRIVQSGQSWQQGPIVLNWLDIQDSFDASGFNLIIHEVAHKLDTRNGDRASGVPFIPLREVAGWEHDLHAAMNNIQEEIELVGENAASIDAYAASDPAECFAVLSEYFFSAPELFAPRFPSLWQRFCQFYQQDPLQRLHHANDTDSFSATNVH</sequence>